<evidence type="ECO:0000255" key="1">
    <source>
        <dbReference type="HAMAP-Rule" id="MF_00509"/>
    </source>
</evidence>
<evidence type="ECO:0000256" key="2">
    <source>
        <dbReference type="SAM" id="MobiDB-lite"/>
    </source>
</evidence>
<keyword id="KW-0131">Cell cycle</keyword>
<keyword id="KW-0132">Cell division</keyword>
<keyword id="KW-0997">Cell inner membrane</keyword>
<keyword id="KW-1003">Cell membrane</keyword>
<keyword id="KW-0472">Membrane</keyword>
<keyword id="KW-0812">Transmembrane</keyword>
<keyword id="KW-1133">Transmembrane helix</keyword>
<feature type="chain" id="PRO_0000237129" description="Cell division protein ZipA">
    <location>
        <begin position="1"/>
        <end position="284"/>
    </location>
</feature>
<feature type="topological domain" description="Periplasmic" evidence="1">
    <location>
        <position position="1"/>
    </location>
</feature>
<feature type="transmembrane region" description="Helical" evidence="1">
    <location>
        <begin position="2"/>
        <end position="22"/>
    </location>
</feature>
<feature type="topological domain" description="Cytoplasmic" evidence="1">
    <location>
        <begin position="23"/>
        <end position="284"/>
    </location>
</feature>
<feature type="region of interest" description="Disordered" evidence="2">
    <location>
        <begin position="47"/>
        <end position="140"/>
    </location>
</feature>
<feature type="compositionally biased region" description="Basic and acidic residues" evidence="2">
    <location>
        <begin position="62"/>
        <end position="75"/>
    </location>
</feature>
<feature type="compositionally biased region" description="Basic and acidic residues" evidence="2">
    <location>
        <begin position="83"/>
        <end position="102"/>
    </location>
</feature>
<feature type="compositionally biased region" description="Basic and acidic residues" evidence="2">
    <location>
        <begin position="119"/>
        <end position="140"/>
    </location>
</feature>
<gene>
    <name evidence="1" type="primary">zipA</name>
    <name type="ordered locus">PFL_1892</name>
</gene>
<sequence>MEIGLREWLIVIGIIVIAGILFDGWRRMRGGKGKLKFRLDRSLSNLPDDEGSAELLGPPRVLDTHKEPQLDEHDLPSVSMPAREPRESSSSKRGKRGGEPHQGDLNLDLDLDSGPSFSSRDDDFPVEESKSASHSDKDQPQAEEVLVISVICRDAAGFKGPALLQNILESGLRFGEMDIFHRHESMAGNGEVLFSMANAVKPGVFDLDDIDHFSTPAVSFFLGLPGPRHPKQAFDVMVAAARKLSQELNGELKDDQRSVLTAQTIEHYRQRIVEFERRALTQKR</sequence>
<accession>Q4KFH2</accession>
<dbReference type="EMBL" id="CP000076">
    <property type="protein sequence ID" value="AAY91179.1"/>
    <property type="molecule type" value="Genomic_DNA"/>
</dbReference>
<dbReference type="RefSeq" id="WP_011060212.1">
    <property type="nucleotide sequence ID" value="NC_004129.6"/>
</dbReference>
<dbReference type="SMR" id="Q4KFH2"/>
<dbReference type="STRING" id="220664.PFL_1892"/>
<dbReference type="GeneID" id="57474918"/>
<dbReference type="KEGG" id="pfl:PFL_1892"/>
<dbReference type="PATRIC" id="fig|220664.5.peg.1929"/>
<dbReference type="eggNOG" id="COG3115">
    <property type="taxonomic scope" value="Bacteria"/>
</dbReference>
<dbReference type="HOGENOM" id="CLU_030174_0_1_6"/>
<dbReference type="Proteomes" id="UP000008540">
    <property type="component" value="Chromosome"/>
</dbReference>
<dbReference type="GO" id="GO:0032153">
    <property type="term" value="C:cell division site"/>
    <property type="evidence" value="ECO:0007669"/>
    <property type="project" value="UniProtKB-UniRule"/>
</dbReference>
<dbReference type="GO" id="GO:0005886">
    <property type="term" value="C:plasma membrane"/>
    <property type="evidence" value="ECO:0007669"/>
    <property type="project" value="UniProtKB-SubCell"/>
</dbReference>
<dbReference type="GO" id="GO:0000917">
    <property type="term" value="P:division septum assembly"/>
    <property type="evidence" value="ECO:0007669"/>
    <property type="project" value="TreeGrafter"/>
</dbReference>
<dbReference type="GO" id="GO:0043093">
    <property type="term" value="P:FtsZ-dependent cytokinesis"/>
    <property type="evidence" value="ECO:0007669"/>
    <property type="project" value="UniProtKB-UniRule"/>
</dbReference>
<dbReference type="Gene3D" id="3.30.1400.10">
    <property type="entry name" value="ZipA, C-terminal FtsZ-binding domain"/>
    <property type="match status" value="1"/>
</dbReference>
<dbReference type="HAMAP" id="MF_00509">
    <property type="entry name" value="ZipA"/>
    <property type="match status" value="1"/>
</dbReference>
<dbReference type="InterPro" id="IPR011919">
    <property type="entry name" value="Cell_div_ZipA"/>
</dbReference>
<dbReference type="InterPro" id="IPR007449">
    <property type="entry name" value="ZipA_FtsZ-bd_C"/>
</dbReference>
<dbReference type="InterPro" id="IPR036765">
    <property type="entry name" value="ZipA_FtsZ-bd_C_sf"/>
</dbReference>
<dbReference type="NCBIfam" id="TIGR02205">
    <property type="entry name" value="septum_zipA"/>
    <property type="match status" value="1"/>
</dbReference>
<dbReference type="PANTHER" id="PTHR38685">
    <property type="entry name" value="CELL DIVISION PROTEIN ZIPA"/>
    <property type="match status" value="1"/>
</dbReference>
<dbReference type="PANTHER" id="PTHR38685:SF1">
    <property type="entry name" value="CELL DIVISION PROTEIN ZIPA"/>
    <property type="match status" value="1"/>
</dbReference>
<dbReference type="Pfam" id="PF04354">
    <property type="entry name" value="ZipA_C"/>
    <property type="match status" value="1"/>
</dbReference>
<dbReference type="SMART" id="SM00771">
    <property type="entry name" value="ZipA_C"/>
    <property type="match status" value="1"/>
</dbReference>
<dbReference type="SUPFAM" id="SSF64383">
    <property type="entry name" value="Cell-division protein ZipA, C-terminal domain"/>
    <property type="match status" value="1"/>
</dbReference>
<name>ZIPA_PSEF5</name>
<organism>
    <name type="scientific">Pseudomonas fluorescens (strain ATCC BAA-477 / NRRL B-23932 / Pf-5)</name>
    <dbReference type="NCBI Taxonomy" id="220664"/>
    <lineage>
        <taxon>Bacteria</taxon>
        <taxon>Pseudomonadati</taxon>
        <taxon>Pseudomonadota</taxon>
        <taxon>Gammaproteobacteria</taxon>
        <taxon>Pseudomonadales</taxon>
        <taxon>Pseudomonadaceae</taxon>
        <taxon>Pseudomonas</taxon>
    </lineage>
</organism>
<reference key="1">
    <citation type="journal article" date="2005" name="Nat. Biotechnol.">
        <title>Complete genome sequence of the plant commensal Pseudomonas fluorescens Pf-5.</title>
        <authorList>
            <person name="Paulsen I.T."/>
            <person name="Press C.M."/>
            <person name="Ravel J."/>
            <person name="Kobayashi D.Y."/>
            <person name="Myers G.S.A."/>
            <person name="Mavrodi D.V."/>
            <person name="DeBoy R.T."/>
            <person name="Seshadri R."/>
            <person name="Ren Q."/>
            <person name="Madupu R."/>
            <person name="Dodson R.J."/>
            <person name="Durkin A.S."/>
            <person name="Brinkac L.M."/>
            <person name="Daugherty S.C."/>
            <person name="Sullivan S.A."/>
            <person name="Rosovitz M.J."/>
            <person name="Gwinn M.L."/>
            <person name="Zhou L."/>
            <person name="Schneider D.J."/>
            <person name="Cartinhour S.W."/>
            <person name="Nelson W.C."/>
            <person name="Weidman J."/>
            <person name="Watkins K."/>
            <person name="Tran K."/>
            <person name="Khouri H."/>
            <person name="Pierson E.A."/>
            <person name="Pierson L.S. III"/>
            <person name="Thomashow L.S."/>
            <person name="Loper J.E."/>
        </authorList>
    </citation>
    <scope>NUCLEOTIDE SEQUENCE [LARGE SCALE GENOMIC DNA]</scope>
    <source>
        <strain>ATCC BAA-477 / NRRL B-23932 / Pf-5</strain>
    </source>
</reference>
<proteinExistence type="inferred from homology"/>
<comment type="function">
    <text evidence="1">Essential cell division protein that stabilizes the FtsZ protofilaments by cross-linking them and that serves as a cytoplasmic membrane anchor for the Z ring. Also required for the recruitment to the septal ring of downstream cell division proteins.</text>
</comment>
<comment type="subunit">
    <text evidence="1">Interacts with FtsZ via their C-terminal domains.</text>
</comment>
<comment type="subcellular location">
    <subcellularLocation>
        <location evidence="1">Cell inner membrane</location>
        <topology evidence="1">Single-pass type I membrane protein</topology>
    </subcellularLocation>
    <text evidence="1">Localizes to the Z ring in an FtsZ-dependent manner.</text>
</comment>
<comment type="similarity">
    <text evidence="1">Belongs to the ZipA family.</text>
</comment>
<protein>
    <recommendedName>
        <fullName evidence="1">Cell division protein ZipA</fullName>
    </recommendedName>
</protein>